<comment type="function">
    <molecule>Gag polyprotein</molecule>
    <text evidence="2">Plays a role in budding and is processed by the viral protease during virion maturation outside the cell. During budding, it recruits, in a PPXY-dependent or independent manner, Nedd4-like ubiquitin ligases that conjugate ubiquitin molecules to Gag, or to Gag binding host factors. Interaction with HECT ubiquitin ligases probably links the viral protein to the host ESCRT pathway and facilitates release.</text>
</comment>
<comment type="function">
    <molecule>Matrix protein p15</molecule>
    <text evidence="2">Targets Gag and gag-pol polyproteins to the plasma membrane via a multipartite membrane binding signal, that includes its myristoylated N-terminus. Also mediates nuclear localization of the pre-integration complex.</text>
</comment>
<comment type="function">
    <molecule>RNA-binding phosphoprotein p12</molecule>
    <text evidence="2">Constituent of the pre-integration complex (PIC) which tethers the latter to mitotic chromosomes.</text>
</comment>
<comment type="function">
    <molecule>Capsid protein p30</molecule>
    <text evidence="2">Forms the spherical core of the virion that encapsulates the genomic RNA-nucleocapsid complex.</text>
</comment>
<comment type="subunit">
    <molecule>Gag polyprotein</molecule>
    <text evidence="2">Interacts (via PPXY motif) with host NEDD4 (By similarity). Interacts (via PSAP motif) with host TSG101 (By similarity). Interacts (via LYPX(n)L motif) with host PDCD6IP (By similarity).</text>
</comment>
<comment type="subunit">
    <molecule>Capsid protein p30</molecule>
    <text evidence="2 3">Homohexamer. Further associates as homomultimer (By similarity). The virus core is composed of a lattice formed from hexagonal rings, each containing six capsid monomers (By similarity). Interacts with mouse UBE2I and mouse PIAS4 (By similarity).</text>
</comment>
<comment type="subcellular location">
    <molecule>Gag polyprotein</molecule>
    <subcellularLocation>
        <location evidence="1">Virion</location>
    </subcellularLocation>
    <subcellularLocation>
        <location evidence="6">Host cell membrane</location>
        <topology evidence="6">Lipid-anchor</topology>
    </subcellularLocation>
</comment>
<comment type="subcellular location">
    <molecule>Matrix protein p15</molecule>
    <subcellularLocation>
        <location evidence="6">Virion</location>
    </subcellularLocation>
</comment>
<comment type="subcellular location">
    <molecule>Capsid protein p30</molecule>
    <subcellularLocation>
        <location evidence="6">Virion</location>
    </subcellularLocation>
</comment>
<comment type="domain">
    <molecule>Gag polyprotein</molecule>
    <text evidence="2">Late-budding domains (L domains) are short sequence motifs essential for viral particle budding. They recruit proteins of the host ESCRT machinery (Endosomal Sorting Complex Required for Transport) or ESCRT-associated proteins. RNA-binding phosphoprotein p12 contains one L domain: a PPXY motif which interacts with the WW domain 3 of NEDD4 E3 ubiquitin ligase. PPXY motif is essential for virus egress. Matrix protein p15 contains one L domain: a PTAP/PSAP motif, which interacts with the UEV domain of TSG101. The junction between the matrix protein p15 and RNA-binding phosphoprotein p12 also contains one L domain: a LYPX(n)L motif which interacts with PDCD6IP. Both PSAP and LYPX(n)L domains might play little to no role in budding and possibly drive residual virus release.</text>
</comment>
<comment type="PTM">
    <molecule>Gag polyprotein</molecule>
    <text evidence="2">Specific enzymatic cleavages by the viral protease yield mature proteins. The protease is released by autocatalytic cleavage. The polyprotein is cleaved during and after budding, this process is termed maturation.</text>
</comment>
<comment type="miscellaneous">
    <text>This protein is synthesized as a Gag-Fos-Fox polyprotein.</text>
</comment>
<organism>
    <name type="scientific">FBR murine osteosarcoma virus</name>
    <name type="common">FBR-MSV</name>
    <name type="synonym">Finkel-Biskis-Reilly murine osteosarcoma virus</name>
    <dbReference type="NCBI Taxonomy" id="353765"/>
    <lineage>
        <taxon>Viruses</taxon>
        <taxon>Riboviria</taxon>
        <taxon>Pararnavirae</taxon>
        <taxon>Artverviricota</taxon>
        <taxon>Revtraviricetes</taxon>
        <taxon>Ortervirales</taxon>
        <taxon>Retroviridae</taxon>
        <taxon>Orthoretrovirinae</taxon>
        <taxon>Gammaretrovirus</taxon>
    </lineage>
</organism>
<proteinExistence type="inferred from homology"/>
<name>GAG_MSVFR</name>
<reference key="1">
    <citation type="journal article" date="1984" name="Virology">
        <title>FBR murine osteosarcoma virus. II. Nucleotide sequence of the provirus reveals that the genome contains sequences acquired from two cellular genes.</title>
        <authorList>
            <person name="van Beveren C."/>
            <person name="Enami S."/>
            <person name="Curran T."/>
            <person name="Verma I.M."/>
        </authorList>
    </citation>
    <scope>NUCLEOTIDE SEQUENCE [GENOMIC DNA]</scope>
</reference>
<organismHost>
    <name type="scientific">Mus musculus</name>
    <name type="common">Mouse</name>
    <dbReference type="NCBI Taxonomy" id="10090"/>
</organismHost>
<accession>P29175</accession>
<protein>
    <recommendedName>
        <fullName>Gag polyprotein</fullName>
    </recommendedName>
    <alternativeName>
        <fullName>Core polyprotein</fullName>
    </alternativeName>
    <component>
        <recommendedName>
            <fullName>Matrix protein p15</fullName>
            <shortName>MA</shortName>
        </recommendedName>
    </component>
    <component>
        <recommendedName>
            <fullName>RNA-binding phosphoprotein p12</fullName>
        </recommendedName>
        <alternativeName>
            <fullName>pp12</fullName>
        </alternativeName>
    </component>
    <component>
        <recommendedName>
            <fullName>Capsid protein p30</fullName>
            <shortName>CA</shortName>
        </recommendedName>
    </component>
</protein>
<keyword id="KW-0167">Capsid protein</keyword>
<keyword id="KW-1032">Host cell membrane</keyword>
<keyword id="KW-1043">Host membrane</keyword>
<keyword id="KW-0945">Host-virus interaction</keyword>
<keyword id="KW-0449">Lipoprotein</keyword>
<keyword id="KW-0472">Membrane</keyword>
<keyword id="KW-0519">Myristate</keyword>
<keyword id="KW-0694">RNA-binding</keyword>
<keyword id="KW-1198">Viral budding</keyword>
<keyword id="KW-1187">Viral budding via the host ESCRT complexes</keyword>
<keyword id="KW-0468">Viral matrix protein</keyword>
<keyword id="KW-1188">Viral release from host cell</keyword>
<keyword id="KW-0946">Virion</keyword>
<evidence type="ECO:0000250" key="1"/>
<evidence type="ECO:0000250" key="2">
    <source>
        <dbReference type="UniProtKB" id="P03332"/>
    </source>
</evidence>
<evidence type="ECO:0000250" key="3">
    <source>
        <dbReference type="UniProtKB" id="P03336"/>
    </source>
</evidence>
<evidence type="ECO:0000255" key="4"/>
<evidence type="ECO:0000256" key="5">
    <source>
        <dbReference type="SAM" id="MobiDB-lite"/>
    </source>
</evidence>
<evidence type="ECO:0000305" key="6"/>
<dbReference type="EMBL" id="K02712">
    <property type="protein sequence ID" value="AAA46573.1"/>
    <property type="status" value="ALT_TERM"/>
    <property type="molecule type" value="Genomic_DNA"/>
</dbReference>
<dbReference type="PIR" id="A23244">
    <property type="entry name" value="FOMVFB"/>
</dbReference>
<dbReference type="SMR" id="P29175"/>
<dbReference type="ELM" id="P29175"/>
<dbReference type="Proteomes" id="UP000237129">
    <property type="component" value="Segment"/>
</dbReference>
<dbReference type="GO" id="GO:0020002">
    <property type="term" value="C:host cell plasma membrane"/>
    <property type="evidence" value="ECO:0007669"/>
    <property type="project" value="UniProtKB-SubCell"/>
</dbReference>
<dbReference type="GO" id="GO:0016020">
    <property type="term" value="C:membrane"/>
    <property type="evidence" value="ECO:0007669"/>
    <property type="project" value="UniProtKB-KW"/>
</dbReference>
<dbReference type="GO" id="GO:0019028">
    <property type="term" value="C:viral capsid"/>
    <property type="evidence" value="ECO:0007669"/>
    <property type="project" value="UniProtKB-KW"/>
</dbReference>
<dbReference type="GO" id="GO:0003723">
    <property type="term" value="F:RNA binding"/>
    <property type="evidence" value="ECO:0007669"/>
    <property type="project" value="UniProtKB-KW"/>
</dbReference>
<dbReference type="GO" id="GO:0039660">
    <property type="term" value="F:structural constituent of virion"/>
    <property type="evidence" value="ECO:0007669"/>
    <property type="project" value="UniProtKB-KW"/>
</dbReference>
<dbReference type="GO" id="GO:0039702">
    <property type="term" value="P:viral budding via host ESCRT complex"/>
    <property type="evidence" value="ECO:0007669"/>
    <property type="project" value="UniProtKB-KW"/>
</dbReference>
<dbReference type="Gene3D" id="1.10.150.180">
    <property type="entry name" value="Gamma-retroviral matrix domain"/>
    <property type="match status" value="1"/>
</dbReference>
<dbReference type="Gene3D" id="1.10.375.10">
    <property type="entry name" value="Human Immunodeficiency Virus Type 1 Capsid Protein"/>
    <property type="match status" value="1"/>
</dbReference>
<dbReference type="InterPro" id="IPR000840">
    <property type="entry name" value="G_retro_matrix"/>
</dbReference>
<dbReference type="InterPro" id="IPR036946">
    <property type="entry name" value="G_retro_matrix_sf"/>
</dbReference>
<dbReference type="InterPro" id="IPR002079">
    <property type="entry name" value="Gag_p12"/>
</dbReference>
<dbReference type="InterPro" id="IPR003036">
    <property type="entry name" value="Gag_P30"/>
</dbReference>
<dbReference type="InterPro" id="IPR008919">
    <property type="entry name" value="Retrov_capsid_N"/>
</dbReference>
<dbReference type="InterPro" id="IPR050462">
    <property type="entry name" value="Retroviral_Gag-Pol_poly"/>
</dbReference>
<dbReference type="InterPro" id="IPR010999">
    <property type="entry name" value="Retrovr_matrix"/>
</dbReference>
<dbReference type="PANTHER" id="PTHR33166">
    <property type="entry name" value="GAG_P30 DOMAIN-CONTAINING PROTEIN"/>
    <property type="match status" value="1"/>
</dbReference>
<dbReference type="Pfam" id="PF01140">
    <property type="entry name" value="Gag_MA"/>
    <property type="match status" value="1"/>
</dbReference>
<dbReference type="Pfam" id="PF01141">
    <property type="entry name" value="Gag_p12"/>
    <property type="match status" value="1"/>
</dbReference>
<dbReference type="Pfam" id="PF02093">
    <property type="entry name" value="Gag_p30"/>
    <property type="match status" value="1"/>
</dbReference>
<dbReference type="SUPFAM" id="SSF47836">
    <property type="entry name" value="Retroviral matrix proteins"/>
    <property type="match status" value="1"/>
</dbReference>
<dbReference type="SUPFAM" id="SSF47943">
    <property type="entry name" value="Retrovirus capsid protein, N-terminal core domain"/>
    <property type="match status" value="1"/>
</dbReference>
<gene>
    <name type="primary">gag</name>
</gene>
<feature type="initiator methionine" description="Removed; by host" evidence="1">
    <location>
        <position position="1"/>
    </location>
</feature>
<feature type="chain" id="PRO_0000390817" description="Gag polyprotein">
    <location>
        <begin position="2"/>
        <end position="310"/>
    </location>
</feature>
<feature type="chain" id="PRO_0000040946" description="Matrix protein p15" evidence="4">
    <location>
        <begin position="2"/>
        <end position="129"/>
    </location>
</feature>
<feature type="chain" id="PRO_0000040947" description="RNA-binding phosphoprotein p12" evidence="4">
    <location>
        <begin position="130"/>
        <end position="214"/>
    </location>
</feature>
<feature type="chain" id="PRO_0000040948" description="Capsid protein p30" evidence="4">
    <location>
        <begin position="215"/>
        <end position="310"/>
    </location>
</feature>
<feature type="region of interest" description="Disordered" evidence="5">
    <location>
        <begin position="107"/>
        <end position="234"/>
    </location>
</feature>
<feature type="region of interest" description="Disordered" evidence="5">
    <location>
        <begin position="281"/>
        <end position="310"/>
    </location>
</feature>
<feature type="short sequence motif" description="PTAP/PSAP motif">
    <location>
        <begin position="109"/>
        <end position="112"/>
    </location>
</feature>
<feature type="short sequence motif" description="LYPX(n)L motif">
    <location>
        <begin position="128"/>
        <end position="132"/>
    </location>
</feature>
<feature type="short sequence motif" description="PPXY motif">
    <location>
        <begin position="161"/>
        <end position="164"/>
    </location>
</feature>
<feature type="site" description="Cleavage; by viral protease" evidence="1">
    <location>
        <begin position="129"/>
        <end position="130"/>
    </location>
</feature>
<feature type="site" description="Cleavage; by viral protease" evidence="1">
    <location>
        <begin position="214"/>
        <end position="215"/>
    </location>
</feature>
<feature type="lipid moiety-binding region" description="N-myristoyl glycine; by host" evidence="1">
    <location>
        <position position="2"/>
    </location>
</feature>
<sequence length="310" mass="33849">MGQTVTTPLSLTLEHWGDVQRIASNQSVDVKKRRWVTFCSAEWPTFDVGWPQDGTFNLDIILQVKSKVFSPGPHGHPDQVPYIVTWEAIAYEPPPWVKPFVSPKLSPSPTAPILPSGPSTQPPPRSALYPALTPSIKPRPSKPQVLSDDGGPLIDLLTEDPPPYGEQGPSSSDGDGDREEATSTSEIPAPSPMVSRLRGKRDPPAADSTTSRAFPLRLGGNGQKNNNPSFSEDPGKLTALIESVLTTHQPTWDDCQQLLGTLLTGEEKQRVLLEARKAVRGNDGRPTQMPNEVNAAFPLERPDWDYTTPE</sequence>